<name>U669_NEMVE</name>
<accession>A7SAZ1</accession>
<evidence type="ECO:0000255" key="1"/>
<evidence type="ECO:0000305" key="2"/>
<protein>
    <recommendedName>
        <fullName>UPF0669 protein v1g209471</fullName>
    </recommendedName>
</protein>
<keyword id="KW-0325">Glycoprotein</keyword>
<keyword id="KW-1185">Reference proteome</keyword>
<keyword id="KW-0964">Secreted</keyword>
<keyword id="KW-0732">Signal</keyword>
<reference key="1">
    <citation type="journal article" date="2007" name="Science">
        <title>Sea anemone genome reveals ancestral eumetazoan gene repertoire and genomic organization.</title>
        <authorList>
            <person name="Putnam N.H."/>
            <person name="Srivastava M."/>
            <person name="Hellsten U."/>
            <person name="Dirks B."/>
            <person name="Chapman J."/>
            <person name="Salamov A."/>
            <person name="Terry A."/>
            <person name="Shapiro H."/>
            <person name="Lindquist E."/>
            <person name="Kapitonov V.V."/>
            <person name="Jurka J."/>
            <person name="Genikhovich G."/>
            <person name="Grigoriev I.V."/>
            <person name="Lucas S.M."/>
            <person name="Steele R.E."/>
            <person name="Finnerty J.R."/>
            <person name="Technau U."/>
            <person name="Martindale M.Q."/>
            <person name="Rokhsar D.S."/>
        </authorList>
    </citation>
    <scope>NUCLEOTIDE SEQUENCE [LARGE SCALE GENOMIC DNA]</scope>
    <source>
        <strain>CH2 X CH6</strain>
    </source>
</reference>
<organism>
    <name type="scientific">Nematostella vectensis</name>
    <name type="common">Starlet sea anemone</name>
    <dbReference type="NCBI Taxonomy" id="45351"/>
    <lineage>
        <taxon>Eukaryota</taxon>
        <taxon>Metazoa</taxon>
        <taxon>Cnidaria</taxon>
        <taxon>Anthozoa</taxon>
        <taxon>Hexacorallia</taxon>
        <taxon>Actiniaria</taxon>
        <taxon>Edwardsiidae</taxon>
        <taxon>Nematostella</taxon>
    </lineage>
</organism>
<sequence>MQGRYSAPLFLLLWLFFLHGTLCEQVLQTFTGEIGAGNYTYFTLNREGEITLILESTEGDADLYISQNVAKPDYENYDLQSSTCGQDVVTIPVEFKRPIGIGVLGHANSPLSKYTMTVVVDYGTGMAEDKNRWYSASEEGGEPQEESLIWMIFVGILKIIFEILL</sequence>
<proteinExistence type="inferred from homology"/>
<dbReference type="EMBL" id="DS469612">
    <property type="protein sequence ID" value="EDO39134.1"/>
    <property type="molecule type" value="Genomic_DNA"/>
</dbReference>
<dbReference type="RefSeq" id="XP_001631197.1">
    <property type="nucleotide sequence ID" value="XM_001631147.1"/>
</dbReference>
<dbReference type="FunCoup" id="A7SAZ1">
    <property type="interactions" value="222"/>
</dbReference>
<dbReference type="STRING" id="45351.A7SAZ1"/>
<dbReference type="EnsemblMetazoa" id="EDO39134">
    <property type="protein sequence ID" value="EDO39134"/>
    <property type="gene ID" value="NEMVEDRAFT_v1g209471"/>
</dbReference>
<dbReference type="KEGG" id="nve:5510763"/>
<dbReference type="eggNOG" id="ENOG502RXJP">
    <property type="taxonomic scope" value="Eukaryota"/>
</dbReference>
<dbReference type="HOGENOM" id="CLU_113576_1_0_1"/>
<dbReference type="InParanoid" id="A7SAZ1"/>
<dbReference type="OMA" id="FGETAYS"/>
<dbReference type="OrthoDB" id="10046613at2759"/>
<dbReference type="PhylomeDB" id="A7SAZ1"/>
<dbReference type="Proteomes" id="UP000001593">
    <property type="component" value="Unassembled WGS sequence"/>
</dbReference>
<dbReference type="GO" id="GO:0005576">
    <property type="term" value="C:extracellular region"/>
    <property type="evidence" value="ECO:0007669"/>
    <property type="project" value="UniProtKB-SubCell"/>
</dbReference>
<dbReference type="Gene3D" id="2.60.120.380">
    <property type="match status" value="1"/>
</dbReference>
<dbReference type="InterPro" id="IPR031420">
    <property type="entry name" value="UPF0669"/>
</dbReference>
<dbReference type="PANTHER" id="PTHR31703">
    <property type="entry name" value="UPF0669 PROTEIN C6ORF120"/>
    <property type="match status" value="1"/>
</dbReference>
<dbReference type="PANTHER" id="PTHR31703:SF2">
    <property type="entry name" value="UPF0669 PROTEIN C6ORF120"/>
    <property type="match status" value="1"/>
</dbReference>
<dbReference type="Pfam" id="PF17065">
    <property type="entry name" value="UPF0669"/>
    <property type="match status" value="1"/>
</dbReference>
<gene>
    <name type="ORF">v1g209471</name>
</gene>
<comment type="subcellular location">
    <subcellularLocation>
        <location evidence="2">Secreted</location>
    </subcellularLocation>
</comment>
<comment type="similarity">
    <text evidence="2">Belongs to the UPF0669 family.</text>
</comment>
<feature type="signal peptide" evidence="1">
    <location>
        <begin position="1"/>
        <end position="23"/>
    </location>
</feature>
<feature type="chain" id="PRO_0000352879" description="UPF0669 protein v1g209471">
    <location>
        <begin position="24"/>
        <end position="165"/>
    </location>
</feature>
<feature type="glycosylation site" description="N-linked (GlcNAc...) asparagine" evidence="1">
    <location>
        <position position="38"/>
    </location>
</feature>